<reference key="1">
    <citation type="journal article" date="2005" name="Proc. Natl. Acad. Sci. U.S.A.">
        <title>Whole genome sequence of Staphylococcus saprophyticus reveals the pathogenesis of uncomplicated urinary tract infection.</title>
        <authorList>
            <person name="Kuroda M."/>
            <person name="Yamashita A."/>
            <person name="Hirakawa H."/>
            <person name="Kumano M."/>
            <person name="Morikawa K."/>
            <person name="Higashide M."/>
            <person name="Maruyama A."/>
            <person name="Inose Y."/>
            <person name="Matoba K."/>
            <person name="Toh H."/>
            <person name="Kuhara S."/>
            <person name="Hattori M."/>
            <person name="Ohta T."/>
        </authorList>
    </citation>
    <scope>NUCLEOTIDE SEQUENCE [LARGE SCALE GENOMIC DNA]</scope>
    <source>
        <strain>ATCC 15305 / DSM 20229 / NCIMB 8711 / NCTC 7292 / S-41</strain>
    </source>
</reference>
<proteinExistence type="predicted"/>
<keyword id="KW-1003">Cell membrane</keyword>
<keyword id="KW-0472">Membrane</keyword>
<keyword id="KW-1185">Reference proteome</keyword>
<keyword id="KW-0812">Transmembrane</keyword>
<keyword id="KW-1133">Transmembrane helix</keyword>
<protein>
    <recommendedName>
        <fullName>Probable elastin-binding protein EbpS</fullName>
    </recommendedName>
</protein>
<accession>Q49XT4</accession>
<dbReference type="EMBL" id="AP008934">
    <property type="protein sequence ID" value="BAE18411.1"/>
    <property type="molecule type" value="Genomic_DNA"/>
</dbReference>
<dbReference type="SMR" id="Q49XT4"/>
<dbReference type="KEGG" id="ssp:SSP1266"/>
<dbReference type="eggNOG" id="COG1388">
    <property type="taxonomic scope" value="Bacteria"/>
</dbReference>
<dbReference type="HOGENOM" id="CLU_043950_0_0_9"/>
<dbReference type="PRO" id="PR:Q49XT4"/>
<dbReference type="Proteomes" id="UP000006371">
    <property type="component" value="Chromosome"/>
</dbReference>
<dbReference type="GO" id="GO:0005886">
    <property type="term" value="C:plasma membrane"/>
    <property type="evidence" value="ECO:0007669"/>
    <property type="project" value="UniProtKB-SubCell"/>
</dbReference>
<dbReference type="Gene3D" id="3.10.350.10">
    <property type="entry name" value="LysM domain"/>
    <property type="match status" value="1"/>
</dbReference>
<dbReference type="InterPro" id="IPR018392">
    <property type="entry name" value="LysM_dom"/>
</dbReference>
<dbReference type="InterPro" id="IPR036779">
    <property type="entry name" value="LysM_dom_sf"/>
</dbReference>
<dbReference type="NCBIfam" id="NF033598">
    <property type="entry name" value="elast_bind_EbpS"/>
    <property type="match status" value="1"/>
</dbReference>
<dbReference type="Pfam" id="PF01476">
    <property type="entry name" value="LysM"/>
    <property type="match status" value="1"/>
</dbReference>
<dbReference type="SMART" id="SM00257">
    <property type="entry name" value="LysM"/>
    <property type="match status" value="1"/>
</dbReference>
<dbReference type="PROSITE" id="PS51782">
    <property type="entry name" value="LYSM"/>
    <property type="match status" value="1"/>
</dbReference>
<feature type="chain" id="PRO_0000271744" description="Probable elastin-binding protein EbpS">
    <location>
        <begin position="1"/>
        <end position="541"/>
    </location>
</feature>
<feature type="transmembrane region" description="Helical" evidence="1">
    <location>
        <begin position="327"/>
        <end position="347"/>
    </location>
</feature>
<feature type="domain" description="LysM" evidence="2">
    <location>
        <begin position="491"/>
        <end position="539"/>
    </location>
</feature>
<feature type="region of interest" description="Disordered" evidence="3">
    <location>
        <begin position="1"/>
        <end position="322"/>
    </location>
</feature>
<feature type="region of interest" description="Disordered" evidence="3">
    <location>
        <begin position="346"/>
        <end position="493"/>
    </location>
</feature>
<feature type="compositionally biased region" description="Basic and acidic residues" evidence="3">
    <location>
        <begin position="1"/>
        <end position="25"/>
    </location>
</feature>
<feature type="compositionally biased region" description="Basic and acidic residues" evidence="3">
    <location>
        <begin position="35"/>
        <end position="49"/>
    </location>
</feature>
<feature type="compositionally biased region" description="Basic and acidic residues" evidence="3">
    <location>
        <begin position="61"/>
        <end position="108"/>
    </location>
</feature>
<feature type="compositionally biased region" description="Polar residues" evidence="3">
    <location>
        <begin position="109"/>
        <end position="126"/>
    </location>
</feature>
<feature type="compositionally biased region" description="Basic and acidic residues" evidence="3">
    <location>
        <begin position="127"/>
        <end position="145"/>
    </location>
</feature>
<feature type="compositionally biased region" description="Low complexity" evidence="3">
    <location>
        <begin position="146"/>
        <end position="165"/>
    </location>
</feature>
<feature type="compositionally biased region" description="Basic and acidic residues" evidence="3">
    <location>
        <begin position="166"/>
        <end position="182"/>
    </location>
</feature>
<feature type="compositionally biased region" description="Polar residues" evidence="3">
    <location>
        <begin position="183"/>
        <end position="198"/>
    </location>
</feature>
<feature type="compositionally biased region" description="Low complexity" evidence="3">
    <location>
        <begin position="215"/>
        <end position="231"/>
    </location>
</feature>
<feature type="compositionally biased region" description="Basic and acidic residues" evidence="3">
    <location>
        <begin position="239"/>
        <end position="260"/>
    </location>
</feature>
<feature type="compositionally biased region" description="Low complexity" evidence="3">
    <location>
        <begin position="267"/>
        <end position="290"/>
    </location>
</feature>
<feature type="compositionally biased region" description="Gly residues" evidence="3">
    <location>
        <begin position="291"/>
        <end position="305"/>
    </location>
</feature>
<feature type="compositionally biased region" description="Basic and acidic residues" evidence="3">
    <location>
        <begin position="309"/>
        <end position="318"/>
    </location>
</feature>
<feature type="compositionally biased region" description="Basic and acidic residues" evidence="3">
    <location>
        <begin position="352"/>
        <end position="396"/>
    </location>
</feature>
<feature type="compositionally biased region" description="Low complexity" evidence="3">
    <location>
        <begin position="398"/>
        <end position="491"/>
    </location>
</feature>
<organism>
    <name type="scientific">Staphylococcus saprophyticus subsp. saprophyticus (strain ATCC 15305 / DSM 20229 / NCIMB 8711 / NCTC 7292 / S-41)</name>
    <dbReference type="NCBI Taxonomy" id="342451"/>
    <lineage>
        <taxon>Bacteria</taxon>
        <taxon>Bacillati</taxon>
        <taxon>Bacillota</taxon>
        <taxon>Bacilli</taxon>
        <taxon>Bacillales</taxon>
        <taxon>Staphylococcaceae</taxon>
        <taxon>Staphylococcus</taxon>
    </lineage>
</organism>
<evidence type="ECO:0000255" key="1"/>
<evidence type="ECO:0000255" key="2">
    <source>
        <dbReference type="PROSITE-ProRule" id="PRU01118"/>
    </source>
</evidence>
<evidence type="ECO:0000256" key="3">
    <source>
        <dbReference type="SAM" id="MobiDB-lite"/>
    </source>
</evidence>
<evidence type="ECO:0000305" key="4"/>
<name>EBPS_STAS1</name>
<comment type="subcellular location">
    <subcellularLocation>
        <location evidence="4">Cell membrane</location>
        <topology evidence="4">Single-pass membrane protein</topology>
    </subcellularLocation>
</comment>
<sequence>MSNNNFKDDFEKNRQSIDPKEHQENTQDSVNDSVDNIKEEVSDKSDEQFPPRNAQRRQRRRDTATNQREDEQSNQEHHNENNEVGDRDNGLQHEDNSSRDSNADKESNDPSQNNNLIHESSNNQQSENRHDINNEKDQSDKDSNNKKGAVIASSGAAGVGAYAASKHNDAASSSKDHNDKAHQQNQDWEQSNQTNDSTETQDENTNNHDSKKKGAAVAGGAAAAGAGAYAAGKHKGKKDKNDNEPEQNESKSDVKNEEKHGSKKKGAAVAGGAAAAGTGAAAASHSKSSTGNGGNGNGGNGGNGNNGDNNHDSEDNNKKKGGLLGKLLPIIAAILILAAIGIFGGMALTGNNDDKGSDDDKKVADNKDKDSDKAKDADSDKDSKSDKDKDKAKDDDNNQATTDSDSSDSSDNANSDSDQGNNDSQDQANSDQNQGTQDEQNSQNNQDQQSDQSQQNGQANSNQNGSSDQSQNASNDSNQQNNQSSNSNSGQRTHVVNGQNLYRIAIQYYGEGTPENVEKIREANNIQGNDIHNGQRLVIPQ</sequence>
<gene>
    <name type="primary">ebpS</name>
    <name type="ordered locus">SSP1266</name>
</gene>